<comment type="function">
    <text evidence="2">Catalyzes the dehydration of dTDP-D-glucose to form dTDP-6-deoxy-D-xylo-4-hexulose via a three-step process involving oxidation, dehydration and reduction.</text>
</comment>
<comment type="catalytic activity">
    <reaction evidence="2">
        <text>dTDP-alpha-D-glucose = dTDP-4-dehydro-6-deoxy-alpha-D-glucose + H2O</text>
        <dbReference type="Rhea" id="RHEA:17221"/>
        <dbReference type="ChEBI" id="CHEBI:15377"/>
        <dbReference type="ChEBI" id="CHEBI:57477"/>
        <dbReference type="ChEBI" id="CHEBI:57649"/>
        <dbReference type="EC" id="4.2.1.46"/>
    </reaction>
</comment>
<comment type="cofactor">
    <cofactor evidence="2">
        <name>NAD(+)</name>
        <dbReference type="ChEBI" id="CHEBI:57540"/>
    </cofactor>
    <text evidence="2">Binds 1 NAD(+) per subunit.</text>
</comment>
<comment type="pathway">
    <text evidence="3">Carbohydrate biosynthesis; dTDP-L-rhamnose biosynthesis.</text>
</comment>
<comment type="pathway">
    <text evidence="3">Bacterial outer membrane biogenesis; LPS O-antigen biosynthesis.</text>
</comment>
<comment type="subunit">
    <text evidence="2">Homodimer.</text>
</comment>
<comment type="similarity">
    <text evidence="2">Belongs to the NAD(P)-dependent epimerase/dehydratase family. dTDP-glucose dehydratase subfamily.</text>
</comment>
<accession>P55293</accession>
<reference key="1">
    <citation type="journal article" date="1995" name="J. Bacteriol.">
        <title>Genetic analysis of the dTDP-rhamnose biosynthesis region of the Escherichia coli VW187 (O7:K1) rfb gene cluster: identification of functional homologs of rfbB and rfbA in the rff cluster and correct location of the rffE gene.</title>
        <authorList>
            <person name="Marolda C.L."/>
            <person name="Valvano M.A."/>
        </authorList>
    </citation>
    <scope>NUCLEOTIDE SEQUENCE [GENOMIC DNA]</scope>
    <scope>PATHWAY</scope>
    <source>
        <strain>O7:K1 / VW187</strain>
    </source>
</reference>
<keyword id="KW-0448">Lipopolysaccharide biosynthesis</keyword>
<keyword id="KW-0456">Lyase</keyword>
<keyword id="KW-0520">NAD</keyword>
<feature type="chain" id="PRO_0000183239" description="dTDP-glucose 4,6-dehydratase">
    <location>
        <begin position="1"/>
        <end position="361"/>
    </location>
</feature>
<feature type="active site" description="Proton donor" evidence="2">
    <location>
        <position position="134"/>
    </location>
</feature>
<feature type="active site" description="Proton acceptor" evidence="2">
    <location>
        <position position="135"/>
    </location>
</feature>
<feature type="active site" description="Proton acceptor" evidence="2">
    <location>
        <position position="167"/>
    </location>
</feature>
<feature type="binding site" evidence="2">
    <location>
        <begin position="11"/>
        <end position="12"/>
    </location>
    <ligand>
        <name>NAD(+)</name>
        <dbReference type="ChEBI" id="CHEBI:57540"/>
    </ligand>
</feature>
<feature type="binding site" evidence="2">
    <location>
        <begin position="32"/>
        <end position="35"/>
    </location>
    <ligand>
        <name>NAD(+)</name>
        <dbReference type="ChEBI" id="CHEBI:57540"/>
    </ligand>
</feature>
<feature type="binding site" evidence="2">
    <location>
        <begin position="58"/>
        <end position="59"/>
    </location>
    <ligand>
        <name>NAD(+)</name>
        <dbReference type="ChEBI" id="CHEBI:57540"/>
    </ligand>
</feature>
<feature type="binding site" evidence="2">
    <location>
        <begin position="80"/>
        <end position="84"/>
    </location>
    <ligand>
        <name>NAD(+)</name>
        <dbReference type="ChEBI" id="CHEBI:57540"/>
    </ligand>
</feature>
<feature type="binding site" evidence="1">
    <location>
        <position position="84"/>
    </location>
    <ligand>
        <name>substrate</name>
    </ligand>
</feature>
<feature type="binding site" evidence="2">
    <location>
        <position position="99"/>
    </location>
    <ligand>
        <name>NAD(+)</name>
        <dbReference type="ChEBI" id="CHEBI:57540"/>
    </ligand>
</feature>
<feature type="binding site" evidence="1">
    <location>
        <position position="133"/>
    </location>
    <ligand>
        <name>substrate</name>
    </ligand>
</feature>
<feature type="binding site" evidence="2">
    <location>
        <begin position="167"/>
        <end position="171"/>
    </location>
    <ligand>
        <name>NAD(+)</name>
        <dbReference type="ChEBI" id="CHEBI:57540"/>
    </ligand>
</feature>
<feature type="binding site" evidence="1">
    <location>
        <position position="196"/>
    </location>
    <ligand>
        <name>substrate</name>
    </ligand>
</feature>
<feature type="binding site" evidence="2">
    <location>
        <position position="197"/>
    </location>
    <ligand>
        <name>NAD(+)</name>
        <dbReference type="ChEBI" id="CHEBI:57540"/>
    </ligand>
</feature>
<feature type="binding site" evidence="1">
    <location>
        <begin position="206"/>
        <end position="207"/>
    </location>
    <ligand>
        <name>substrate</name>
    </ligand>
</feature>
<feature type="binding site" evidence="1">
    <location>
        <begin position="222"/>
        <end position="224"/>
    </location>
    <ligand>
        <name>substrate</name>
    </ligand>
</feature>
<feature type="binding site" evidence="1">
    <location>
        <position position="231"/>
    </location>
    <ligand>
        <name>substrate</name>
    </ligand>
</feature>
<feature type="binding site" evidence="1">
    <location>
        <position position="266"/>
    </location>
    <ligand>
        <name>substrate</name>
    </ligand>
</feature>
<feature type="binding site" evidence="1">
    <location>
        <begin position="296"/>
        <end position="300"/>
    </location>
    <ligand>
        <name>substrate</name>
    </ligand>
</feature>
<name>RMLB1_ECOLX</name>
<dbReference type="EC" id="4.2.1.46" evidence="2"/>
<dbReference type="EMBL" id="AF125322">
    <property type="protein sequence ID" value="AAC63612.1"/>
    <property type="molecule type" value="Genomic_DNA"/>
</dbReference>
<dbReference type="PIR" id="S78542">
    <property type="entry name" value="S78542"/>
</dbReference>
<dbReference type="SMR" id="P55293"/>
<dbReference type="eggNOG" id="COG1088">
    <property type="taxonomic scope" value="Bacteria"/>
</dbReference>
<dbReference type="SABIO-RK" id="P55293"/>
<dbReference type="UniPathway" id="UPA00124"/>
<dbReference type="UniPathway" id="UPA00281"/>
<dbReference type="GO" id="GO:0008460">
    <property type="term" value="F:dTDP-glucose 4,6-dehydratase activity"/>
    <property type="evidence" value="ECO:0000250"/>
    <property type="project" value="UniProtKB"/>
</dbReference>
<dbReference type="GO" id="GO:0019305">
    <property type="term" value="P:dTDP-rhamnose biosynthetic process"/>
    <property type="evidence" value="ECO:0007669"/>
    <property type="project" value="UniProtKB-UniPathway"/>
</dbReference>
<dbReference type="GO" id="GO:0009103">
    <property type="term" value="P:lipopolysaccharide biosynthetic process"/>
    <property type="evidence" value="ECO:0000250"/>
    <property type="project" value="UniProtKB"/>
</dbReference>
<dbReference type="GO" id="GO:0009243">
    <property type="term" value="P:O antigen biosynthetic process"/>
    <property type="evidence" value="ECO:0007669"/>
    <property type="project" value="UniProtKB-UniPathway"/>
</dbReference>
<dbReference type="GO" id="GO:0000271">
    <property type="term" value="P:polysaccharide biosynthetic process"/>
    <property type="evidence" value="ECO:0000250"/>
    <property type="project" value="UniProtKB"/>
</dbReference>
<dbReference type="CDD" id="cd05246">
    <property type="entry name" value="dTDP_GD_SDR_e"/>
    <property type="match status" value="1"/>
</dbReference>
<dbReference type="FunFam" id="3.40.50.720:FF:000108">
    <property type="entry name" value="dTDP-glucose 4,6-dehydratase"/>
    <property type="match status" value="1"/>
</dbReference>
<dbReference type="Gene3D" id="3.40.50.720">
    <property type="entry name" value="NAD(P)-binding Rossmann-like Domain"/>
    <property type="match status" value="1"/>
</dbReference>
<dbReference type="Gene3D" id="3.90.25.10">
    <property type="entry name" value="UDP-galactose 4-epimerase, domain 1"/>
    <property type="match status" value="1"/>
</dbReference>
<dbReference type="InterPro" id="IPR005888">
    <property type="entry name" value="dTDP_Gluc_deHydtase"/>
</dbReference>
<dbReference type="InterPro" id="IPR016040">
    <property type="entry name" value="NAD(P)-bd_dom"/>
</dbReference>
<dbReference type="InterPro" id="IPR036291">
    <property type="entry name" value="NAD(P)-bd_dom_sf"/>
</dbReference>
<dbReference type="NCBIfam" id="TIGR01181">
    <property type="entry name" value="dTDP_gluc_dehyt"/>
    <property type="match status" value="1"/>
</dbReference>
<dbReference type="NCBIfam" id="NF007490">
    <property type="entry name" value="PRK10084.1"/>
    <property type="match status" value="1"/>
</dbReference>
<dbReference type="PANTHER" id="PTHR43000">
    <property type="entry name" value="DTDP-D-GLUCOSE 4,6-DEHYDRATASE-RELATED"/>
    <property type="match status" value="1"/>
</dbReference>
<dbReference type="Pfam" id="PF16363">
    <property type="entry name" value="GDP_Man_Dehyd"/>
    <property type="match status" value="1"/>
</dbReference>
<dbReference type="SUPFAM" id="SSF51735">
    <property type="entry name" value="NAD(P)-binding Rossmann-fold domains"/>
    <property type="match status" value="1"/>
</dbReference>
<sequence>MKILVTGGAGFIGSAVVRHIINNTQDSVVNVDKLTYAGNLESLAEISDSERYSFENADICDAEGDGLYFGQHQLDAVMHLAAESHVDRSITGPAAFIETNIVGTYVLLEAARNYWSGLDDEKKKNFRFHHISTDEVYGDLPHPDEVNSNETLQLFTETTAYAPSSPYSASKASSDHLVRAWKRTYGLPTIVSNCSNNYGPYHFPEKLIPLVILNALEGKALPIYGKGDQIRDWLYVEDHARALYTVVTEGKAGETYNIGGHNEKKNIDVVFTICDLLDEIVPKEKSYREQITYVADRPGHDRRYAIDADKISRELGWKPQETFESGIRKTVEWYLANTNWVENVKSGAYQSWIEQNYEGRQ</sequence>
<organism>
    <name type="scientific">Escherichia coli</name>
    <dbReference type="NCBI Taxonomy" id="562"/>
    <lineage>
        <taxon>Bacteria</taxon>
        <taxon>Pseudomonadati</taxon>
        <taxon>Pseudomonadota</taxon>
        <taxon>Gammaproteobacteria</taxon>
        <taxon>Enterobacterales</taxon>
        <taxon>Enterobacteriaceae</taxon>
        <taxon>Escherichia</taxon>
    </lineage>
</organism>
<evidence type="ECO:0000250" key="1">
    <source>
        <dbReference type="UniProtKB" id="P26391"/>
    </source>
</evidence>
<evidence type="ECO:0000250" key="2">
    <source>
        <dbReference type="UniProtKB" id="P27830"/>
    </source>
</evidence>
<evidence type="ECO:0000269" key="3">
    <source>
    </source>
</evidence>
<proteinExistence type="inferred from homology"/>
<protein>
    <recommendedName>
        <fullName evidence="2">dTDP-glucose 4,6-dehydratase</fullName>
        <ecNumber evidence="2">4.2.1.46</ecNumber>
    </recommendedName>
</protein>
<gene>
    <name type="primary">rfbB</name>
</gene>